<sequence length="375" mass="41692">MAGSQIKIPLPKPPDSDSQRLNAFPVIMAQEGKGRLLRQIRLRKILSGDPSDQQITFVNTYGFIRATPETSEFISESSQQKVTPVVTACMLSFGAGPVLEDPQHMLKALDQTDIRVRKTASDKEQILFEINRIPNLFRHYQISADHLIQASSDKYVKSPAKLIAGVNYIYCVTFLSVTVCSASLKFRVARPLLAARSRLVRAVQMEILLRVTCKKDSQMAKSMLNDPDGEGCIASVWFHLCNLCKGRNKLRSYDENYFASKCRKMNLTVSIGDMWGPTILVHAGGHIPTTAKPFFNSRGWVCHPIHQSSPSLAKTLWSSGCEIKAASAILQGSDYASLAKTDDIIYSKIKVDKDAANYKGVSWSPFRKSASMRNL</sequence>
<comment type="function">
    <text evidence="1">The M protein has a crucial role in virus assembly and interacts with the RNP complex as well as with the viral membrane.</text>
</comment>
<comment type="subcellular location">
    <subcellularLocation>
        <location evidence="2">Virion</location>
    </subcellularLocation>
</comment>
<comment type="similarity">
    <text evidence="3">Belongs to the morbillivirus/respirovirus/rubulavirus M protein family.</text>
</comment>
<protein>
    <recommendedName>
        <fullName>Matrix protein</fullName>
    </recommendedName>
</protein>
<proteinExistence type="evidence at protein level"/>
<organism>
    <name type="scientific">Mumps virus genotype A (strain Jeryl-Lynn)</name>
    <name type="common">MuV</name>
    <dbReference type="NCBI Taxonomy" id="11168"/>
    <lineage>
        <taxon>Viruses</taxon>
        <taxon>Riboviria</taxon>
        <taxon>Orthornavirae</taxon>
        <taxon>Negarnaviricota</taxon>
        <taxon>Haploviricotina</taxon>
        <taxon>Monjiviricetes</taxon>
        <taxon>Mononegavirales</taxon>
        <taxon>Paramyxoviridae</taxon>
        <taxon>Rubulavirinae</taxon>
        <taxon>Orthorubulavirus</taxon>
        <taxon>Orthorubulavirus parotitidis</taxon>
        <taxon>Mumps orthorubulavirus</taxon>
    </lineage>
</organism>
<evidence type="ECO:0000250" key="1">
    <source>
        <dbReference type="UniProtKB" id="Q9W850"/>
    </source>
</evidence>
<evidence type="ECO:0000269" key="2">
    <source>
    </source>
</evidence>
<evidence type="ECO:0000305" key="3"/>
<dbReference type="EMBL" id="AF201473">
    <property type="protein sequence ID" value="AAF70392.1"/>
    <property type="molecule type" value="Genomic_RNA"/>
</dbReference>
<dbReference type="EMBL" id="AF338106">
    <property type="protein sequence ID" value="AAK83226.1"/>
    <property type="molecule type" value="Genomic_RNA"/>
</dbReference>
<dbReference type="SMR" id="Q9J4L4"/>
<dbReference type="Proteomes" id="UP000140319">
    <property type="component" value="Genome"/>
</dbReference>
<dbReference type="Proteomes" id="UP000163835">
    <property type="component" value="Genome"/>
</dbReference>
<dbReference type="GO" id="GO:0044423">
    <property type="term" value="C:virion component"/>
    <property type="evidence" value="ECO:0007669"/>
    <property type="project" value="UniProtKB-KW"/>
</dbReference>
<dbReference type="GO" id="GO:0039660">
    <property type="term" value="F:structural constituent of virion"/>
    <property type="evidence" value="ECO:0007669"/>
    <property type="project" value="UniProtKB-KW"/>
</dbReference>
<dbReference type="GO" id="GO:0019068">
    <property type="term" value="P:virion assembly"/>
    <property type="evidence" value="ECO:0007669"/>
    <property type="project" value="InterPro"/>
</dbReference>
<dbReference type="Gene3D" id="2.70.20.60">
    <property type="entry name" value="Viral matrix protein, C-terminal domain"/>
    <property type="match status" value="1"/>
</dbReference>
<dbReference type="Gene3D" id="2.70.20.50">
    <property type="entry name" value="Viral matrix protein, N-terminal domain"/>
    <property type="match status" value="1"/>
</dbReference>
<dbReference type="InterPro" id="IPR042539">
    <property type="entry name" value="Matrix_C"/>
</dbReference>
<dbReference type="InterPro" id="IPR042540">
    <property type="entry name" value="Matrix_N"/>
</dbReference>
<dbReference type="InterPro" id="IPR055413">
    <property type="entry name" value="Matrix_Paramyxo_C"/>
</dbReference>
<dbReference type="InterPro" id="IPR000982">
    <property type="entry name" value="Matrix_Paramyxo_N"/>
</dbReference>
<dbReference type="Pfam" id="PF23765">
    <property type="entry name" value="Matrix_Paramyxo_C"/>
    <property type="match status" value="1"/>
</dbReference>
<dbReference type="Pfam" id="PF00661">
    <property type="entry name" value="Matrix_Paramyxo_N"/>
    <property type="match status" value="1"/>
</dbReference>
<reference key="1">
    <citation type="journal article" date="2000" name="J. Virol.">
        <title>Rescue of mumps virus from cDNA.</title>
        <authorList>
            <person name="Clarke D.K."/>
            <person name="Sidhu M.S."/>
            <person name="Johnson J.E."/>
            <person name="Udem S.A."/>
        </authorList>
    </citation>
    <scope>NUCLEOTIDE SEQUENCE [LARGE SCALE GENOMIC DNA]</scope>
    <source>
        <strain>Jeryl-Lynn</strain>
    </source>
</reference>
<reference key="2">
    <citation type="journal article" date="2002" name="Virology">
        <title>Sequence diversity of Jeryl Lynn strain of mumps virus: quantitative mutant analysis for vaccine quality control.</title>
        <authorList>
            <person name="Amexis G."/>
            <person name="Rubin S."/>
            <person name="Chizhikov V."/>
            <person name="Pelloquin F."/>
            <person name="Carbone K."/>
            <person name="Chumakov K."/>
        </authorList>
    </citation>
    <scope>NUCLEOTIDE SEQUENCE [LARGE SCALE GENOMIC DNA]</scope>
    <source>
        <strain>Jeryl-Lynn</strain>
    </source>
</reference>
<reference key="3">
    <citation type="journal article" date="2016" name="Virol. J.">
        <title>Identification of mumps virus protein and lipid composition by mass spectrometry.</title>
        <authorList>
            <person name="Brgles M."/>
            <person name="Bonta M."/>
            <person name="Santak M."/>
            <person name="Jagusic M."/>
            <person name="Forcic D."/>
            <person name="Halassy B."/>
            <person name="Allmaier G."/>
            <person name="Marchetti-Deschmann M."/>
        </authorList>
    </citation>
    <scope>IDENTIFICATION BY MASS SPECTROMETRY</scope>
    <scope>SUBCELLULAR LOCATION</scope>
    <source>
        <strain>Jeryl-Lynn 5</strain>
    </source>
</reference>
<feature type="chain" id="PRO_0000462029" description="Matrix protein">
    <location>
        <begin position="1"/>
        <end position="375"/>
    </location>
</feature>
<gene>
    <name type="primary">M</name>
</gene>
<accession>Q9J4L4</accession>
<accession>Q77IS4</accession>
<organismHost>
    <name type="scientific">Homo sapiens</name>
    <name type="common">Human</name>
    <dbReference type="NCBI Taxonomy" id="9606"/>
</organismHost>
<name>MATRX_MUMPJ</name>
<keyword id="KW-0261">Viral envelope protein</keyword>
<keyword id="KW-0468">Viral matrix protein</keyword>
<keyword id="KW-0946">Virion</keyword>